<organism>
    <name type="scientific">Azorhizobium caulinodans (strain ATCC 43989 / DSM 5975 / JCM 20966 / LMG 6465 / NBRC 14845 / NCIMB 13405 / ORS 571)</name>
    <dbReference type="NCBI Taxonomy" id="438753"/>
    <lineage>
        <taxon>Bacteria</taxon>
        <taxon>Pseudomonadati</taxon>
        <taxon>Pseudomonadota</taxon>
        <taxon>Alphaproteobacteria</taxon>
        <taxon>Hyphomicrobiales</taxon>
        <taxon>Xanthobacteraceae</taxon>
        <taxon>Azorhizobium</taxon>
    </lineage>
</organism>
<proteinExistence type="inferred from homology"/>
<dbReference type="EC" id="3.4.21.92" evidence="1"/>
<dbReference type="EMBL" id="AP009384">
    <property type="protein sequence ID" value="BAF87606.1"/>
    <property type="molecule type" value="Genomic_DNA"/>
</dbReference>
<dbReference type="RefSeq" id="WP_012170136.1">
    <property type="nucleotide sequence ID" value="NC_009937.1"/>
</dbReference>
<dbReference type="SMR" id="A8HYF2"/>
<dbReference type="STRING" id="438753.AZC_1608"/>
<dbReference type="MEROPS" id="S14.001"/>
<dbReference type="KEGG" id="azc:AZC_1608"/>
<dbReference type="eggNOG" id="COG0740">
    <property type="taxonomic scope" value="Bacteria"/>
</dbReference>
<dbReference type="HOGENOM" id="CLU_058707_3_2_5"/>
<dbReference type="Proteomes" id="UP000000270">
    <property type="component" value="Chromosome"/>
</dbReference>
<dbReference type="GO" id="GO:0005737">
    <property type="term" value="C:cytoplasm"/>
    <property type="evidence" value="ECO:0007669"/>
    <property type="project" value="UniProtKB-SubCell"/>
</dbReference>
<dbReference type="GO" id="GO:0009368">
    <property type="term" value="C:endopeptidase Clp complex"/>
    <property type="evidence" value="ECO:0007669"/>
    <property type="project" value="TreeGrafter"/>
</dbReference>
<dbReference type="GO" id="GO:0004176">
    <property type="term" value="F:ATP-dependent peptidase activity"/>
    <property type="evidence" value="ECO:0007669"/>
    <property type="project" value="InterPro"/>
</dbReference>
<dbReference type="GO" id="GO:0051117">
    <property type="term" value="F:ATPase binding"/>
    <property type="evidence" value="ECO:0007669"/>
    <property type="project" value="TreeGrafter"/>
</dbReference>
<dbReference type="GO" id="GO:0004252">
    <property type="term" value="F:serine-type endopeptidase activity"/>
    <property type="evidence" value="ECO:0007669"/>
    <property type="project" value="UniProtKB-UniRule"/>
</dbReference>
<dbReference type="GO" id="GO:0006515">
    <property type="term" value="P:protein quality control for misfolded or incompletely synthesized proteins"/>
    <property type="evidence" value="ECO:0007669"/>
    <property type="project" value="TreeGrafter"/>
</dbReference>
<dbReference type="CDD" id="cd07017">
    <property type="entry name" value="S14_ClpP_2"/>
    <property type="match status" value="1"/>
</dbReference>
<dbReference type="FunFam" id="3.90.226.10:FF:000001">
    <property type="entry name" value="ATP-dependent Clp protease proteolytic subunit"/>
    <property type="match status" value="1"/>
</dbReference>
<dbReference type="Gene3D" id="3.90.226.10">
    <property type="entry name" value="2-enoyl-CoA Hydratase, Chain A, domain 1"/>
    <property type="match status" value="1"/>
</dbReference>
<dbReference type="HAMAP" id="MF_00444">
    <property type="entry name" value="ClpP"/>
    <property type="match status" value="1"/>
</dbReference>
<dbReference type="InterPro" id="IPR001907">
    <property type="entry name" value="ClpP"/>
</dbReference>
<dbReference type="InterPro" id="IPR029045">
    <property type="entry name" value="ClpP/crotonase-like_dom_sf"/>
</dbReference>
<dbReference type="InterPro" id="IPR023562">
    <property type="entry name" value="ClpP/TepA"/>
</dbReference>
<dbReference type="InterPro" id="IPR033135">
    <property type="entry name" value="ClpP_His_AS"/>
</dbReference>
<dbReference type="InterPro" id="IPR018215">
    <property type="entry name" value="ClpP_Ser_AS"/>
</dbReference>
<dbReference type="NCBIfam" id="TIGR00493">
    <property type="entry name" value="clpP"/>
    <property type="match status" value="1"/>
</dbReference>
<dbReference type="NCBIfam" id="NF001368">
    <property type="entry name" value="PRK00277.1"/>
    <property type="match status" value="1"/>
</dbReference>
<dbReference type="NCBIfam" id="NF009205">
    <property type="entry name" value="PRK12553.1"/>
    <property type="match status" value="1"/>
</dbReference>
<dbReference type="PANTHER" id="PTHR10381">
    <property type="entry name" value="ATP-DEPENDENT CLP PROTEASE PROTEOLYTIC SUBUNIT"/>
    <property type="match status" value="1"/>
</dbReference>
<dbReference type="PANTHER" id="PTHR10381:SF70">
    <property type="entry name" value="ATP-DEPENDENT CLP PROTEASE PROTEOLYTIC SUBUNIT"/>
    <property type="match status" value="1"/>
</dbReference>
<dbReference type="Pfam" id="PF00574">
    <property type="entry name" value="CLP_protease"/>
    <property type="match status" value="1"/>
</dbReference>
<dbReference type="PRINTS" id="PR00127">
    <property type="entry name" value="CLPPROTEASEP"/>
</dbReference>
<dbReference type="SUPFAM" id="SSF52096">
    <property type="entry name" value="ClpP/crotonase"/>
    <property type="match status" value="1"/>
</dbReference>
<dbReference type="PROSITE" id="PS00382">
    <property type="entry name" value="CLP_PROTEASE_HIS"/>
    <property type="match status" value="1"/>
</dbReference>
<dbReference type="PROSITE" id="PS00381">
    <property type="entry name" value="CLP_PROTEASE_SER"/>
    <property type="match status" value="1"/>
</dbReference>
<reference key="1">
    <citation type="submission" date="2007-04" db="EMBL/GenBank/DDBJ databases">
        <title>Complete genome sequence of the nitrogen-fixing bacterium Azorhizobium caulinodans ORS571.</title>
        <authorList>
            <person name="Lee K.B."/>
            <person name="Backer P.D."/>
            <person name="Aono T."/>
            <person name="Liu C.T."/>
            <person name="Suzuki S."/>
            <person name="Suzuki T."/>
            <person name="Kaneko T."/>
            <person name="Yamada M."/>
            <person name="Tabata S."/>
            <person name="Kupfer D.M."/>
            <person name="Najar F.Z."/>
            <person name="Wiley G.B."/>
            <person name="Roe B."/>
            <person name="Binnewies T."/>
            <person name="Ussery D."/>
            <person name="Vereecke D."/>
            <person name="Gevers D."/>
            <person name="Holsters M."/>
            <person name="Oyaizu H."/>
        </authorList>
    </citation>
    <scope>NUCLEOTIDE SEQUENCE [LARGE SCALE GENOMIC DNA]</scope>
    <source>
        <strain>ATCC 43989 / DSM 5975 / JCM 20966 / LMG 6465 / NBRC 14845 / NCIMB 13405 / ORS 571</strain>
    </source>
</reference>
<comment type="function">
    <text evidence="1">Cleaves peptides in various proteins in a process that requires ATP hydrolysis. Has a chymotrypsin-like activity. Plays a major role in the degradation of misfolded proteins.</text>
</comment>
<comment type="catalytic activity">
    <reaction evidence="1">
        <text>Hydrolysis of proteins to small peptides in the presence of ATP and magnesium. alpha-casein is the usual test substrate. In the absence of ATP, only oligopeptides shorter than five residues are hydrolyzed (such as succinyl-Leu-Tyr-|-NHMec, and Leu-Tyr-Leu-|-Tyr-Trp, in which cleavage of the -Tyr-|-Leu- and -Tyr-|-Trp bonds also occurs).</text>
        <dbReference type="EC" id="3.4.21.92"/>
    </reaction>
</comment>
<comment type="subunit">
    <text evidence="1">Fourteen ClpP subunits assemble into 2 heptameric rings which stack back to back to give a disk-like structure with a central cavity, resembling the structure of eukaryotic proteasomes.</text>
</comment>
<comment type="subcellular location">
    <subcellularLocation>
        <location evidence="1">Cytoplasm</location>
    </subcellularLocation>
</comment>
<comment type="similarity">
    <text evidence="1">Belongs to the peptidase S14 family.</text>
</comment>
<feature type="chain" id="PRO_1000072339" description="ATP-dependent Clp protease proteolytic subunit">
    <location>
        <begin position="1"/>
        <end position="210"/>
    </location>
</feature>
<feature type="active site" description="Nucleophile" evidence="1">
    <location>
        <position position="107"/>
    </location>
</feature>
<feature type="active site" evidence="1">
    <location>
        <position position="132"/>
    </location>
</feature>
<protein>
    <recommendedName>
        <fullName evidence="1">ATP-dependent Clp protease proteolytic subunit</fullName>
        <ecNumber evidence="1">3.4.21.92</ecNumber>
    </recommendedName>
    <alternativeName>
        <fullName evidence="1">Endopeptidase Clp</fullName>
    </alternativeName>
</protein>
<sequence>MRDPVDTYMNYLVPMVVEQTNRGERAYDIYSRLLKERIIFLTGPVEDGMSTLAVAQLLFLEAENPKKEISMYINSPGGVVTSGLAIYDTMQFIRPAVSTLCIGQAASMGSLLLTAGEKGLRFALPNARIMVHQPSGGFQGQVTDIMLHAQEILSLKKRLNEIYVKHTGQPIEKIEDALERDNFMTANAAQEFGLIDTVIDKRPSDEPAKA</sequence>
<accession>A8HYF2</accession>
<name>CLPP_AZOC5</name>
<gene>
    <name evidence="1" type="primary">clpP</name>
    <name type="ordered locus">AZC_1608</name>
</gene>
<evidence type="ECO:0000255" key="1">
    <source>
        <dbReference type="HAMAP-Rule" id="MF_00444"/>
    </source>
</evidence>
<keyword id="KW-0963">Cytoplasm</keyword>
<keyword id="KW-0378">Hydrolase</keyword>
<keyword id="KW-0645">Protease</keyword>
<keyword id="KW-1185">Reference proteome</keyword>
<keyword id="KW-0720">Serine protease</keyword>